<accession>B0C429</accession>
<keyword id="KW-1185">Reference proteome</keyword>
<keyword id="KW-0687">Ribonucleoprotein</keyword>
<keyword id="KW-0689">Ribosomal protein</keyword>
<reference key="1">
    <citation type="journal article" date="2008" name="Proc. Natl. Acad. Sci. U.S.A.">
        <title>Niche adaptation and genome expansion in the chlorophyll d-producing cyanobacterium Acaryochloris marina.</title>
        <authorList>
            <person name="Swingley W.D."/>
            <person name="Chen M."/>
            <person name="Cheung P.C."/>
            <person name="Conrad A.L."/>
            <person name="Dejesa L.C."/>
            <person name="Hao J."/>
            <person name="Honchak B.M."/>
            <person name="Karbach L.E."/>
            <person name="Kurdoglu A."/>
            <person name="Lahiri S."/>
            <person name="Mastrian S.D."/>
            <person name="Miyashita H."/>
            <person name="Page L."/>
            <person name="Ramakrishna P."/>
            <person name="Satoh S."/>
            <person name="Sattley W.M."/>
            <person name="Shimada Y."/>
            <person name="Taylor H.L."/>
            <person name="Tomo T."/>
            <person name="Tsuchiya T."/>
            <person name="Wang Z.T."/>
            <person name="Raymond J."/>
            <person name="Mimuro M."/>
            <person name="Blankenship R.E."/>
            <person name="Touchman J.W."/>
        </authorList>
    </citation>
    <scope>NUCLEOTIDE SEQUENCE [LARGE SCALE GENOMIC DNA]</scope>
    <source>
        <strain>MBIC 11017</strain>
    </source>
</reference>
<proteinExistence type="inferred from homology"/>
<organism>
    <name type="scientific">Acaryochloris marina (strain MBIC 11017)</name>
    <dbReference type="NCBI Taxonomy" id="329726"/>
    <lineage>
        <taxon>Bacteria</taxon>
        <taxon>Bacillati</taxon>
        <taxon>Cyanobacteriota</taxon>
        <taxon>Cyanophyceae</taxon>
        <taxon>Acaryochloridales</taxon>
        <taxon>Acaryochloridaceae</taxon>
        <taxon>Acaryochloris</taxon>
    </lineage>
</organism>
<name>RL17_ACAM1</name>
<gene>
    <name evidence="1" type="primary">rplQ</name>
    <name evidence="1" type="synonym">rpl17</name>
    <name type="ordered locus">AM1_1252</name>
</gene>
<protein>
    <recommendedName>
        <fullName evidence="1">Large ribosomal subunit protein bL17</fullName>
    </recommendedName>
    <alternativeName>
        <fullName evidence="2">50S ribosomal protein L17</fullName>
    </alternativeName>
</protein>
<dbReference type="EMBL" id="CP000828">
    <property type="protein sequence ID" value="ABW26289.1"/>
    <property type="molecule type" value="Genomic_DNA"/>
</dbReference>
<dbReference type="RefSeq" id="WP_010480580.1">
    <property type="nucleotide sequence ID" value="NC_009925.1"/>
</dbReference>
<dbReference type="SMR" id="B0C429"/>
<dbReference type="STRING" id="329726.AM1_1252"/>
<dbReference type="KEGG" id="amr:AM1_1252"/>
<dbReference type="eggNOG" id="COG0203">
    <property type="taxonomic scope" value="Bacteria"/>
</dbReference>
<dbReference type="HOGENOM" id="CLU_074407_2_2_3"/>
<dbReference type="OrthoDB" id="9809073at2"/>
<dbReference type="Proteomes" id="UP000000268">
    <property type="component" value="Chromosome"/>
</dbReference>
<dbReference type="GO" id="GO:0022625">
    <property type="term" value="C:cytosolic large ribosomal subunit"/>
    <property type="evidence" value="ECO:0007669"/>
    <property type="project" value="TreeGrafter"/>
</dbReference>
<dbReference type="GO" id="GO:0003735">
    <property type="term" value="F:structural constituent of ribosome"/>
    <property type="evidence" value="ECO:0007669"/>
    <property type="project" value="InterPro"/>
</dbReference>
<dbReference type="GO" id="GO:0006412">
    <property type="term" value="P:translation"/>
    <property type="evidence" value="ECO:0007669"/>
    <property type="project" value="UniProtKB-UniRule"/>
</dbReference>
<dbReference type="FunFam" id="3.90.1030.10:FF:000001">
    <property type="entry name" value="50S ribosomal protein L17"/>
    <property type="match status" value="1"/>
</dbReference>
<dbReference type="Gene3D" id="3.90.1030.10">
    <property type="entry name" value="Ribosomal protein L17"/>
    <property type="match status" value="1"/>
</dbReference>
<dbReference type="HAMAP" id="MF_01368">
    <property type="entry name" value="Ribosomal_bL17"/>
    <property type="match status" value="1"/>
</dbReference>
<dbReference type="InterPro" id="IPR000456">
    <property type="entry name" value="Ribosomal_bL17"/>
</dbReference>
<dbReference type="InterPro" id="IPR036373">
    <property type="entry name" value="Ribosomal_bL17_sf"/>
</dbReference>
<dbReference type="NCBIfam" id="TIGR00059">
    <property type="entry name" value="L17"/>
    <property type="match status" value="1"/>
</dbReference>
<dbReference type="PANTHER" id="PTHR14413:SF16">
    <property type="entry name" value="LARGE RIBOSOMAL SUBUNIT PROTEIN BL17M"/>
    <property type="match status" value="1"/>
</dbReference>
<dbReference type="PANTHER" id="PTHR14413">
    <property type="entry name" value="RIBOSOMAL PROTEIN L17"/>
    <property type="match status" value="1"/>
</dbReference>
<dbReference type="Pfam" id="PF01196">
    <property type="entry name" value="Ribosomal_L17"/>
    <property type="match status" value="1"/>
</dbReference>
<dbReference type="SUPFAM" id="SSF64263">
    <property type="entry name" value="Prokaryotic ribosomal protein L17"/>
    <property type="match status" value="1"/>
</dbReference>
<sequence length="116" mass="13285">MRHRCRVHKLGKPADQRKALLRSLSTQLIRHGRVTTTKARAKAVRSQVEKMITLAKDGSLASRRQALGYIYDKQLVHALFDQVADRYGDRNGGYTRIIRTIRRRGDNAEMAIIELT</sequence>
<comment type="subunit">
    <text evidence="1">Part of the 50S ribosomal subunit. Contacts protein L32.</text>
</comment>
<comment type="similarity">
    <text evidence="1">Belongs to the bacterial ribosomal protein bL17 family.</text>
</comment>
<feature type="chain" id="PRO_1000087156" description="Large ribosomal subunit protein bL17">
    <location>
        <begin position="1"/>
        <end position="116"/>
    </location>
</feature>
<evidence type="ECO:0000255" key="1">
    <source>
        <dbReference type="HAMAP-Rule" id="MF_01368"/>
    </source>
</evidence>
<evidence type="ECO:0000305" key="2"/>